<comment type="function">
    <text evidence="7">Carboxypeptidase that catalyzes the release of a C-terminal amino acid, with a preference for large aromatic C-terminal residues.</text>
</comment>
<comment type="catalytic activity">
    <reaction evidence="7">
        <text>Similar to that of carboxypeptidase A (EC 3.4.17.1), but with a preference for bulkier C-terminal residues.</text>
        <dbReference type="EC" id="3.4.17.15"/>
    </reaction>
</comment>
<comment type="cofactor">
    <cofactor evidence="5 9">
        <name>Zn(2+)</name>
        <dbReference type="ChEBI" id="CHEBI:29105"/>
    </cofactor>
    <text evidence="5 9">Binds 1 zinc ion per subunit.</text>
</comment>
<comment type="biophysicochemical properties">
    <kinetics>
        <KM evidence="7">36.4 uM for 3-(2-furyl)acryloyl-Phe-Phe (at 25 degrees Celsius)</KM>
        <KM evidence="7">16.3 uM for 3-(2-furyl)acryloyl-Phe-Trp (at 25 degrees Celsius)</KM>
        <KM evidence="7">393 uM for 3-(2-furyl)acryloyl-Phe-Leu (at 25 degrees Celsius)</KM>
        <KM evidence="7">460 uM for 3-(2-furyl)acryloyl-Phe-Ile (at 25 degrees Celsius)</KM>
        <text evidence="7">kcat is 121 sec(-1) with 3-(2-furyl)acryloyl-Phe-Phe as substrate (at 25 degrees Celsius) (PubMed:20385563). kcat is 65.3 sec(-1) with 3-(2-furyl)acryloyl-Phe-Trp as substrate (at 25 degrees Celsius) (PubMed:20385563). kcat is 18.6 sec(-1) with 3-(2-furyl)acryloyl-Phe-Leu as substrate (at 25 degrees Celsius) (PubMed:20385563). kcat is 5.37 sec(-1) with 3-(2-furyl)acryloyl-Phe-Ile as substrate (at 25 degrees Celsius) (PubMed:20385563).</text>
    </kinetics>
</comment>
<comment type="subcellular location">
    <subcellularLocation>
        <location evidence="2">Secreted</location>
    </subcellularLocation>
</comment>
<comment type="similarity">
    <text evidence="11">Belongs to the peptidase M14 family.</text>
</comment>
<comment type="sequence caution" evidence="11">
    <conflict type="erroneous initiation">
        <sequence resource="EMBL-CDS" id="AAA74425"/>
    </conflict>
    <text>Truncated N-terminus.</text>
</comment>
<comment type="sequence caution" evidence="11">
    <conflict type="erroneous initiation">
        <sequence resource="EMBL-CDS" id="AAH07009"/>
    </conflict>
    <text>Truncated N-terminus.</text>
</comment>
<comment type="sequence caution" evidence="11">
    <conflict type="erroneous initiation">
        <sequence resource="EMBL-CDS" id="AAH14571"/>
    </conflict>
    <text>Truncated N-terminus.</text>
</comment>
<comment type="sequence caution" evidence="11">
    <conflict type="erroneous initiation">
        <sequence resource="EMBL-CDS" id="AAH15140"/>
    </conflict>
    <text>Truncated N-terminus.</text>
</comment>
<comment type="sequence caution" evidence="11">
    <conflict type="erroneous gene model prediction">
        <sequence resource="EMBL-CDS" id="EAL24092"/>
    </conflict>
</comment>
<accession>P48052</accession>
<accession>A4D1M4</accession>
<accession>C9JIK1</accession>
<accession>Q53XS1</accession>
<accession>Q96A12</accession>
<accession>Q96QN3</accession>
<accession>Q9UCF1</accession>
<sequence>MAMRLILFFGALFGHIYCLETFVGDQVLEIVPSNEEQIKNLLQLEAQEHLQLDFWKSPTTPGETAHVRVPFVNVQAVKVFLESQGIAYSIMIEDVQVLLDKENEEMLFNRRRERSGNFNFGAYHTLEEISQEMDNLVAEHPGLVSKVNIGSSFENRPMNVLKFSTGGDKPAIWLDAGIHAREWVTQATALWTANKIVSDYGKDPSITSILDALDIFLLPVTNPDGYVFSQTKNRMWRKTRSKVSGSLCVGVDPNRNWDAGFGGPGASSNPCSDSYHGPSANSEVEVKSIVDFIKSHGKVKAFITLHSYSQLLMFPYGYKCTKLDDFDELSEVAQKAAQSLRSLHGTKYKVGPICSVIYQASGGSIDWSYDYGIKYSFAFELRDTGRYGFLLPARQILPTAEETWLGLKAIMEHVRDHPY</sequence>
<dbReference type="EC" id="3.4.17.15" evidence="7"/>
<dbReference type="EMBL" id="AC024085">
    <property type="status" value="NOT_ANNOTATED_CDS"/>
    <property type="molecule type" value="Genomic_DNA"/>
</dbReference>
<dbReference type="EMBL" id="CH236950">
    <property type="protein sequence ID" value="EAL24092.1"/>
    <property type="status" value="ALT_SEQ"/>
    <property type="molecule type" value="Genomic_DNA"/>
</dbReference>
<dbReference type="EMBL" id="BC007009">
    <property type="protein sequence ID" value="AAH07009.1"/>
    <property type="status" value="ALT_INIT"/>
    <property type="molecule type" value="mRNA"/>
</dbReference>
<dbReference type="EMBL" id="BC014571">
    <property type="protein sequence ID" value="AAH14571.1"/>
    <property type="status" value="ALT_INIT"/>
    <property type="molecule type" value="mRNA"/>
</dbReference>
<dbReference type="EMBL" id="BC015140">
    <property type="protein sequence ID" value="AAH15140.1"/>
    <property type="status" value="ALT_INIT"/>
    <property type="molecule type" value="mRNA"/>
</dbReference>
<dbReference type="EMBL" id="U19977">
    <property type="protein sequence ID" value="AAA74425.1"/>
    <property type="status" value="ALT_INIT"/>
    <property type="molecule type" value="mRNA"/>
</dbReference>
<dbReference type="EMBL" id="BT007403">
    <property type="protein sequence ID" value="AAP36067.1"/>
    <property type="molecule type" value="mRNA"/>
</dbReference>
<dbReference type="CCDS" id="CCDS5817.2"/>
<dbReference type="PIR" id="A56171">
    <property type="entry name" value="A56171"/>
</dbReference>
<dbReference type="RefSeq" id="NP_001860.2">
    <property type="nucleotide sequence ID" value="NM_001869.3"/>
</dbReference>
<dbReference type="PDB" id="1AYE">
    <property type="method" value="X-ray"/>
    <property type="resolution" value="1.80 A"/>
    <property type="chains" value="A=19-419"/>
</dbReference>
<dbReference type="PDB" id="1DTD">
    <property type="method" value="X-ray"/>
    <property type="resolution" value="1.65 A"/>
    <property type="chains" value="A=118-419"/>
</dbReference>
<dbReference type="PDB" id="1O6X">
    <property type="method" value="NMR"/>
    <property type="chains" value="A=19-96"/>
</dbReference>
<dbReference type="PDBsum" id="1AYE"/>
<dbReference type="PDBsum" id="1DTD"/>
<dbReference type="PDBsum" id="1O6X"/>
<dbReference type="BMRB" id="P48052"/>
<dbReference type="SMR" id="P48052"/>
<dbReference type="BioGRID" id="107750">
    <property type="interactions" value="8"/>
</dbReference>
<dbReference type="FunCoup" id="P48052">
    <property type="interactions" value="141"/>
</dbReference>
<dbReference type="IntAct" id="P48052">
    <property type="interactions" value="9"/>
</dbReference>
<dbReference type="MINT" id="P48052"/>
<dbReference type="STRING" id="9606.ENSP00000222481"/>
<dbReference type="BindingDB" id="P48052"/>
<dbReference type="ChEMBL" id="CHEMBL4939"/>
<dbReference type="MEROPS" id="M14.002"/>
<dbReference type="iPTMnet" id="P48052"/>
<dbReference type="PhosphoSitePlus" id="P48052"/>
<dbReference type="BioMuta" id="CPA2"/>
<dbReference type="DMDM" id="294862522"/>
<dbReference type="jPOST" id="P48052"/>
<dbReference type="MassIVE" id="P48052"/>
<dbReference type="PaxDb" id="9606-ENSP00000222481"/>
<dbReference type="PeptideAtlas" id="P48052"/>
<dbReference type="ProteomicsDB" id="55843"/>
<dbReference type="Antibodypedia" id="17945">
    <property type="antibodies" value="546 antibodies from 32 providers"/>
</dbReference>
<dbReference type="DNASU" id="1358"/>
<dbReference type="Ensembl" id="ENST00000222481.9">
    <property type="protein sequence ID" value="ENSP00000222481.4"/>
    <property type="gene ID" value="ENSG00000158516.12"/>
</dbReference>
<dbReference type="GeneID" id="1358"/>
<dbReference type="KEGG" id="hsa:1358"/>
<dbReference type="MANE-Select" id="ENST00000222481.9">
    <property type="protein sequence ID" value="ENSP00000222481.4"/>
    <property type="RefSeq nucleotide sequence ID" value="NM_001869.3"/>
    <property type="RefSeq protein sequence ID" value="NP_001860.2"/>
</dbReference>
<dbReference type="UCSC" id="uc003vpq.4">
    <property type="organism name" value="human"/>
</dbReference>
<dbReference type="AGR" id="HGNC:2297"/>
<dbReference type="CTD" id="1358"/>
<dbReference type="DisGeNET" id="1358"/>
<dbReference type="GeneCards" id="CPA2"/>
<dbReference type="HGNC" id="HGNC:2297">
    <property type="gene designation" value="CPA2"/>
</dbReference>
<dbReference type="HPA" id="ENSG00000158516">
    <property type="expression patterns" value="Tissue enriched (pancreas)"/>
</dbReference>
<dbReference type="MIM" id="600688">
    <property type="type" value="gene"/>
</dbReference>
<dbReference type="neXtProt" id="NX_P48052"/>
<dbReference type="OpenTargets" id="ENSG00000158516"/>
<dbReference type="PharmGKB" id="PA26817"/>
<dbReference type="VEuPathDB" id="HostDB:ENSG00000158516"/>
<dbReference type="eggNOG" id="KOG2650">
    <property type="taxonomic scope" value="Eukaryota"/>
</dbReference>
<dbReference type="GeneTree" id="ENSGT00940000160121"/>
<dbReference type="HOGENOM" id="CLU_019326_0_0_1"/>
<dbReference type="InParanoid" id="P48052"/>
<dbReference type="OMA" id="WSYDSGI"/>
<dbReference type="OrthoDB" id="3626597at2759"/>
<dbReference type="PAN-GO" id="P48052">
    <property type="GO annotations" value="3 GO annotations based on evolutionary models"/>
</dbReference>
<dbReference type="PhylomeDB" id="P48052"/>
<dbReference type="TreeFam" id="TF317197"/>
<dbReference type="BRENDA" id="3.4.17.15">
    <property type="organism ID" value="2681"/>
</dbReference>
<dbReference type="PathwayCommons" id="P48052"/>
<dbReference type="Reactome" id="R-HSA-9925561">
    <property type="pathway name" value="Developmental Lineage of Pancreatic Acinar Cells"/>
</dbReference>
<dbReference type="SABIO-RK" id="P48052"/>
<dbReference type="SignaLink" id="P48052"/>
<dbReference type="BioGRID-ORCS" id="1358">
    <property type="hits" value="10 hits in 1141 CRISPR screens"/>
</dbReference>
<dbReference type="ChiTaRS" id="CPA2">
    <property type="organism name" value="human"/>
</dbReference>
<dbReference type="EvolutionaryTrace" id="P48052"/>
<dbReference type="GeneWiki" id="Carboxypeptidase_A2"/>
<dbReference type="GenomeRNAi" id="1358"/>
<dbReference type="Pharos" id="P48052">
    <property type="development level" value="Tchem"/>
</dbReference>
<dbReference type="PRO" id="PR:P48052"/>
<dbReference type="Proteomes" id="UP000005640">
    <property type="component" value="Chromosome 7"/>
</dbReference>
<dbReference type="RNAct" id="P48052">
    <property type="molecule type" value="protein"/>
</dbReference>
<dbReference type="Bgee" id="ENSG00000158516">
    <property type="expression patterns" value="Expressed in body of pancreas and 102 other cell types or tissues"/>
</dbReference>
<dbReference type="ExpressionAtlas" id="P48052">
    <property type="expression patterns" value="baseline and differential"/>
</dbReference>
<dbReference type="GO" id="GO:0005576">
    <property type="term" value="C:extracellular region"/>
    <property type="evidence" value="ECO:0000314"/>
    <property type="project" value="UniProtKB"/>
</dbReference>
<dbReference type="GO" id="GO:0005615">
    <property type="term" value="C:extracellular space"/>
    <property type="evidence" value="ECO:0000318"/>
    <property type="project" value="GO_Central"/>
</dbReference>
<dbReference type="GO" id="GO:0005773">
    <property type="term" value="C:vacuole"/>
    <property type="evidence" value="ECO:0007669"/>
    <property type="project" value="GOC"/>
</dbReference>
<dbReference type="GO" id="GO:0004180">
    <property type="term" value="F:carboxypeptidase activity"/>
    <property type="evidence" value="ECO:0000314"/>
    <property type="project" value="UniProtKB"/>
</dbReference>
<dbReference type="GO" id="GO:0004181">
    <property type="term" value="F:metallocarboxypeptidase activity"/>
    <property type="evidence" value="ECO:0000314"/>
    <property type="project" value="UniProtKB"/>
</dbReference>
<dbReference type="GO" id="GO:0008270">
    <property type="term" value="F:zinc ion binding"/>
    <property type="evidence" value="ECO:0000314"/>
    <property type="project" value="UniProtKB"/>
</dbReference>
<dbReference type="GO" id="GO:0007039">
    <property type="term" value="P:protein catabolic process in the vacuole"/>
    <property type="evidence" value="ECO:0000304"/>
    <property type="project" value="ProtInc"/>
</dbReference>
<dbReference type="GO" id="GO:0006508">
    <property type="term" value="P:proteolysis"/>
    <property type="evidence" value="ECO:0000318"/>
    <property type="project" value="GO_Central"/>
</dbReference>
<dbReference type="CDD" id="cd03870">
    <property type="entry name" value="M14_CPA"/>
    <property type="match status" value="1"/>
</dbReference>
<dbReference type="FunFam" id="3.40.630.10:FF:000132">
    <property type="entry name" value="Carboxypeptidase A1"/>
    <property type="match status" value="1"/>
</dbReference>
<dbReference type="FunFam" id="3.30.70.340:FF:000001">
    <property type="entry name" value="Carboxypeptidase A5"/>
    <property type="match status" value="1"/>
</dbReference>
<dbReference type="Gene3D" id="3.30.70.340">
    <property type="entry name" value="Metallocarboxypeptidase-like"/>
    <property type="match status" value="1"/>
</dbReference>
<dbReference type="Gene3D" id="3.40.630.10">
    <property type="entry name" value="Zn peptidases"/>
    <property type="match status" value="1"/>
</dbReference>
<dbReference type="InterPro" id="IPR034248">
    <property type="entry name" value="CPA_M14_CPD"/>
</dbReference>
<dbReference type="InterPro" id="IPR036990">
    <property type="entry name" value="M14A-like_propep"/>
</dbReference>
<dbReference type="InterPro" id="IPR003146">
    <property type="entry name" value="M14A_act_pep"/>
</dbReference>
<dbReference type="InterPro" id="IPR000834">
    <property type="entry name" value="Peptidase_M14"/>
</dbReference>
<dbReference type="PANTHER" id="PTHR11705:SF71">
    <property type="entry name" value="CARBOXYPEPTIDASE A2"/>
    <property type="match status" value="1"/>
</dbReference>
<dbReference type="PANTHER" id="PTHR11705">
    <property type="entry name" value="PROTEASE FAMILY M14 CARBOXYPEPTIDASE A,B"/>
    <property type="match status" value="1"/>
</dbReference>
<dbReference type="Pfam" id="PF00246">
    <property type="entry name" value="Peptidase_M14"/>
    <property type="match status" value="1"/>
</dbReference>
<dbReference type="Pfam" id="PF02244">
    <property type="entry name" value="Propep_M14"/>
    <property type="match status" value="1"/>
</dbReference>
<dbReference type="PRINTS" id="PR00765">
    <property type="entry name" value="CRBOXYPTASEA"/>
</dbReference>
<dbReference type="SMART" id="SM00631">
    <property type="entry name" value="Zn_pept"/>
    <property type="match status" value="1"/>
</dbReference>
<dbReference type="SUPFAM" id="SSF54897">
    <property type="entry name" value="Protease propeptides/inhibitors"/>
    <property type="match status" value="1"/>
</dbReference>
<dbReference type="SUPFAM" id="SSF53187">
    <property type="entry name" value="Zn-dependent exopeptidases"/>
    <property type="match status" value="1"/>
</dbReference>
<dbReference type="PROSITE" id="PS00132">
    <property type="entry name" value="CARBOXYPEPT_ZN_1"/>
    <property type="match status" value="1"/>
</dbReference>
<dbReference type="PROSITE" id="PS00133">
    <property type="entry name" value="CARBOXYPEPT_ZN_2"/>
    <property type="match status" value="1"/>
</dbReference>
<dbReference type="PROSITE" id="PS52035">
    <property type="entry name" value="PEPTIDASE_M14"/>
    <property type="match status" value="1"/>
</dbReference>
<feature type="signal peptide" evidence="3">
    <location>
        <begin position="1"/>
        <end position="18"/>
    </location>
</feature>
<feature type="propeptide" id="PRO_0000004353" description="Activation peptide" evidence="8">
    <location>
        <begin position="19"/>
        <end position="114"/>
    </location>
</feature>
<feature type="chain" id="PRO_0000004354" description="Carboxypeptidase A2">
    <location>
        <begin position="115"/>
        <end position="419"/>
    </location>
</feature>
<feature type="domain" description="Peptidase M14" evidence="4">
    <location>
        <begin position="122"/>
        <end position="414"/>
    </location>
</feature>
<feature type="active site" description="Proton donor/acceptor" evidence="4">
    <location>
        <position position="380"/>
    </location>
</feature>
<feature type="binding site" evidence="1">
    <location>
        <begin position="179"/>
        <end position="182"/>
    </location>
    <ligand>
        <name>substrate</name>
    </ligand>
</feature>
<feature type="binding site" evidence="4 5 9">
    <location>
        <position position="179"/>
    </location>
    <ligand>
        <name>Zn(2+)</name>
        <dbReference type="ChEBI" id="CHEBI:29105"/>
        <note>catalytic</note>
    </ligand>
</feature>
<feature type="binding site" evidence="4 5 9">
    <location>
        <position position="182"/>
    </location>
    <ligand>
        <name>Zn(2+)</name>
        <dbReference type="ChEBI" id="CHEBI:29105"/>
        <note>catalytic</note>
    </ligand>
</feature>
<feature type="binding site" evidence="1">
    <location>
        <position position="237"/>
    </location>
    <ligand>
        <name>substrate</name>
    </ligand>
</feature>
<feature type="binding site" evidence="1">
    <location>
        <begin position="254"/>
        <end position="255"/>
    </location>
    <ligand>
        <name>substrate</name>
    </ligand>
</feature>
<feature type="binding site" evidence="4 5 9">
    <location>
        <position position="306"/>
    </location>
    <ligand>
        <name>Zn(2+)</name>
        <dbReference type="ChEBI" id="CHEBI:29105"/>
        <note>catalytic</note>
    </ligand>
</feature>
<feature type="binding site" evidence="1">
    <location>
        <begin position="307"/>
        <end position="308"/>
    </location>
    <ligand>
        <name>substrate</name>
    </ligand>
</feature>
<feature type="binding site" evidence="1">
    <location>
        <position position="358"/>
    </location>
    <ligand>
        <name>substrate</name>
    </ligand>
</feature>
<feature type="disulfide bond" evidence="5 9">
    <location>
        <begin position="248"/>
        <end position="271"/>
    </location>
</feature>
<feature type="disulfide bond" evidence="5 9">
    <location>
        <begin position="320"/>
        <end position="354"/>
    </location>
</feature>
<feature type="sequence variant" id="VAR_031204" description="In dbSNP:rs17850135." evidence="6 10">
    <original>E</original>
    <variation>G</variation>
    <location>
        <position position="82"/>
    </location>
</feature>
<feature type="sequence conflict" description="In Ref. 7; AA sequence." evidence="11" ref="7">
    <original>L</original>
    <variation>S</variation>
    <location>
        <position position="19"/>
    </location>
</feature>
<feature type="sequence conflict" description="In Ref. 7; AA sequence." evidence="11" ref="7">
    <original>K</original>
    <variation>N</variation>
    <location>
        <position position="39"/>
    </location>
</feature>
<feature type="sequence conflict" description="In Ref. 4; AAA74425." evidence="11" ref="4">
    <original>T</original>
    <variation>I</variation>
    <location>
        <position position="304"/>
    </location>
</feature>
<feature type="strand" evidence="12">
    <location>
        <begin position="26"/>
        <end position="30"/>
    </location>
</feature>
<feature type="helix" evidence="12">
    <location>
        <begin position="35"/>
        <end position="46"/>
    </location>
</feature>
<feature type="helix" evidence="12">
    <location>
        <begin position="48"/>
        <end position="50"/>
    </location>
</feature>
<feature type="strand" evidence="12">
    <location>
        <begin position="53"/>
        <end position="56"/>
    </location>
</feature>
<feature type="strand" evidence="12">
    <location>
        <begin position="65"/>
        <end position="69"/>
    </location>
</feature>
<feature type="helix" evidence="12">
    <location>
        <begin position="71"/>
        <end position="73"/>
    </location>
</feature>
<feature type="helix" evidence="12">
    <location>
        <begin position="74"/>
        <end position="83"/>
    </location>
</feature>
<feature type="strand" evidence="12">
    <location>
        <begin position="88"/>
        <end position="93"/>
    </location>
</feature>
<feature type="helix" evidence="12">
    <location>
        <begin position="95"/>
        <end position="112"/>
    </location>
</feature>
<feature type="turn" evidence="12">
    <location>
        <begin position="113"/>
        <end position="115"/>
    </location>
</feature>
<feature type="strand" evidence="12">
    <location>
        <begin position="120"/>
        <end position="122"/>
    </location>
</feature>
<feature type="helix" evidence="13">
    <location>
        <begin position="126"/>
        <end position="139"/>
    </location>
</feature>
<feature type="turn" evidence="13">
    <location>
        <begin position="141"/>
        <end position="143"/>
    </location>
</feature>
<feature type="strand" evidence="13">
    <location>
        <begin position="144"/>
        <end position="151"/>
    </location>
</feature>
<feature type="strand" evidence="13">
    <location>
        <begin position="157"/>
        <end position="163"/>
    </location>
</feature>
<feature type="strand" evidence="13">
    <location>
        <begin position="166"/>
        <end position="168"/>
    </location>
</feature>
<feature type="strand" evidence="13">
    <location>
        <begin position="171"/>
        <end position="175"/>
    </location>
</feature>
<feature type="helix" evidence="13">
    <location>
        <begin position="183"/>
        <end position="199"/>
    </location>
</feature>
<feature type="turn" evidence="13">
    <location>
        <begin position="200"/>
        <end position="202"/>
    </location>
</feature>
<feature type="helix" evidence="13">
    <location>
        <begin position="204"/>
        <end position="212"/>
    </location>
</feature>
<feature type="strand" evidence="13">
    <location>
        <begin position="214"/>
        <end position="219"/>
    </location>
</feature>
<feature type="helix" evidence="13">
    <location>
        <begin position="223"/>
        <end position="231"/>
    </location>
</feature>
<feature type="helix" evidence="13">
    <location>
        <begin position="253"/>
        <end position="255"/>
    </location>
</feature>
<feature type="strand" evidence="13">
    <location>
        <begin position="257"/>
        <end position="260"/>
    </location>
</feature>
<feature type="strand" evidence="12">
    <location>
        <begin position="263"/>
        <end position="267"/>
    </location>
</feature>
<feature type="helix" evidence="13">
    <location>
        <begin position="284"/>
        <end position="296"/>
    </location>
</feature>
<feature type="strand" evidence="13">
    <location>
        <begin position="299"/>
        <end position="306"/>
    </location>
</feature>
<feature type="strand" evidence="13">
    <location>
        <begin position="311"/>
        <end position="315"/>
    </location>
</feature>
<feature type="strand" evidence="12">
    <location>
        <begin position="317"/>
        <end position="319"/>
    </location>
</feature>
<feature type="helix" evidence="13">
    <location>
        <begin position="326"/>
        <end position="341"/>
    </location>
</feature>
<feature type="turn" evidence="13">
    <location>
        <begin position="342"/>
        <end position="344"/>
    </location>
</feature>
<feature type="strand" evidence="13">
    <location>
        <begin position="349"/>
        <end position="352"/>
    </location>
</feature>
<feature type="helix" evidence="13">
    <location>
        <begin position="353"/>
        <end position="356"/>
    </location>
</feature>
<feature type="helix" evidence="13">
    <location>
        <begin position="364"/>
        <end position="371"/>
    </location>
</feature>
<feature type="strand" evidence="13">
    <location>
        <begin position="375"/>
        <end position="380"/>
    </location>
</feature>
<feature type="strand" evidence="13">
    <location>
        <begin position="384"/>
        <end position="387"/>
    </location>
</feature>
<feature type="helix" evidence="13">
    <location>
        <begin position="393"/>
        <end position="395"/>
    </location>
</feature>
<feature type="helix" evidence="13">
    <location>
        <begin position="396"/>
        <end position="416"/>
    </location>
</feature>
<proteinExistence type="evidence at protein level"/>
<protein>
    <recommendedName>
        <fullName>Carboxypeptidase A2</fullName>
        <ecNumber evidence="7">3.4.17.15</ecNumber>
    </recommendedName>
</protein>
<keyword id="KW-0002">3D-structure</keyword>
<keyword id="KW-0121">Carboxypeptidase</keyword>
<keyword id="KW-0903">Direct protein sequencing</keyword>
<keyword id="KW-1015">Disulfide bond</keyword>
<keyword id="KW-0378">Hydrolase</keyword>
<keyword id="KW-0479">Metal-binding</keyword>
<keyword id="KW-0482">Metalloprotease</keyword>
<keyword id="KW-0645">Protease</keyword>
<keyword id="KW-1267">Proteomics identification</keyword>
<keyword id="KW-1185">Reference proteome</keyword>
<keyword id="KW-0964">Secreted</keyword>
<keyword id="KW-0732">Signal</keyword>
<keyword id="KW-0862">Zinc</keyword>
<keyword id="KW-0865">Zymogen</keyword>
<reference key="1">
    <citation type="journal article" date="2003" name="Nature">
        <title>The DNA sequence of human chromosome 7.</title>
        <authorList>
            <person name="Hillier L.W."/>
            <person name="Fulton R.S."/>
            <person name="Fulton L.A."/>
            <person name="Graves T.A."/>
            <person name="Pepin K.H."/>
            <person name="Wagner-McPherson C."/>
            <person name="Layman D."/>
            <person name="Maas J."/>
            <person name="Jaeger S."/>
            <person name="Walker R."/>
            <person name="Wylie K."/>
            <person name="Sekhon M."/>
            <person name="Becker M.C."/>
            <person name="O'Laughlin M.D."/>
            <person name="Schaller M.E."/>
            <person name="Fewell G.A."/>
            <person name="Delehaunty K.D."/>
            <person name="Miner T.L."/>
            <person name="Nash W.E."/>
            <person name="Cordes M."/>
            <person name="Du H."/>
            <person name="Sun H."/>
            <person name="Edwards J."/>
            <person name="Bradshaw-Cordum H."/>
            <person name="Ali J."/>
            <person name="Andrews S."/>
            <person name="Isak A."/>
            <person name="Vanbrunt A."/>
            <person name="Nguyen C."/>
            <person name="Du F."/>
            <person name="Lamar B."/>
            <person name="Courtney L."/>
            <person name="Kalicki J."/>
            <person name="Ozersky P."/>
            <person name="Bielicki L."/>
            <person name="Scott K."/>
            <person name="Holmes A."/>
            <person name="Harkins R."/>
            <person name="Harris A."/>
            <person name="Strong C.M."/>
            <person name="Hou S."/>
            <person name="Tomlinson C."/>
            <person name="Dauphin-Kohlberg S."/>
            <person name="Kozlowicz-Reilly A."/>
            <person name="Leonard S."/>
            <person name="Rohlfing T."/>
            <person name="Rock S.M."/>
            <person name="Tin-Wollam A.-M."/>
            <person name="Abbott A."/>
            <person name="Minx P."/>
            <person name="Maupin R."/>
            <person name="Strowmatt C."/>
            <person name="Latreille P."/>
            <person name="Miller N."/>
            <person name="Johnson D."/>
            <person name="Murray J."/>
            <person name="Woessner J.P."/>
            <person name="Wendl M.C."/>
            <person name="Yang S.-P."/>
            <person name="Schultz B.R."/>
            <person name="Wallis J.W."/>
            <person name="Spieth J."/>
            <person name="Bieri T.A."/>
            <person name="Nelson J.O."/>
            <person name="Berkowicz N."/>
            <person name="Wohldmann P.E."/>
            <person name="Cook L.L."/>
            <person name="Hickenbotham M.T."/>
            <person name="Eldred J."/>
            <person name="Williams D."/>
            <person name="Bedell J.A."/>
            <person name="Mardis E.R."/>
            <person name="Clifton S.W."/>
            <person name="Chissoe S.L."/>
            <person name="Marra M.A."/>
            <person name="Raymond C."/>
            <person name="Haugen E."/>
            <person name="Gillett W."/>
            <person name="Zhou Y."/>
            <person name="James R."/>
            <person name="Phelps K."/>
            <person name="Iadanoto S."/>
            <person name="Bubb K."/>
            <person name="Simms E."/>
            <person name="Levy R."/>
            <person name="Clendenning J."/>
            <person name="Kaul R."/>
            <person name="Kent W.J."/>
            <person name="Furey T.S."/>
            <person name="Baertsch R.A."/>
            <person name="Brent M.R."/>
            <person name="Keibler E."/>
            <person name="Flicek P."/>
            <person name="Bork P."/>
            <person name="Suyama M."/>
            <person name="Bailey J.A."/>
            <person name="Portnoy M.E."/>
            <person name="Torrents D."/>
            <person name="Chinwalla A.T."/>
            <person name="Gish W.R."/>
            <person name="Eddy S.R."/>
            <person name="McPherson J.D."/>
            <person name="Olson M.V."/>
            <person name="Eichler E.E."/>
            <person name="Green E.D."/>
            <person name="Waterston R.H."/>
            <person name="Wilson R.K."/>
        </authorList>
    </citation>
    <scope>NUCLEOTIDE SEQUENCE [LARGE SCALE GENOMIC DNA]</scope>
</reference>
<reference key="2">
    <citation type="journal article" date="2003" name="Science">
        <title>Human chromosome 7: DNA sequence and biology.</title>
        <authorList>
            <person name="Scherer S.W."/>
            <person name="Cheung J."/>
            <person name="MacDonald J.R."/>
            <person name="Osborne L.R."/>
            <person name="Nakabayashi K."/>
            <person name="Herbrick J.-A."/>
            <person name="Carson A.R."/>
            <person name="Parker-Katiraee L."/>
            <person name="Skaug J."/>
            <person name="Khaja R."/>
            <person name="Zhang J."/>
            <person name="Hudek A.K."/>
            <person name="Li M."/>
            <person name="Haddad M."/>
            <person name="Duggan G.E."/>
            <person name="Fernandez B.A."/>
            <person name="Kanematsu E."/>
            <person name="Gentles S."/>
            <person name="Christopoulos C.C."/>
            <person name="Choufani S."/>
            <person name="Kwasnicka D."/>
            <person name="Zheng X.H."/>
            <person name="Lai Z."/>
            <person name="Nusskern D.R."/>
            <person name="Zhang Q."/>
            <person name="Gu Z."/>
            <person name="Lu F."/>
            <person name="Zeesman S."/>
            <person name="Nowaczyk M.J."/>
            <person name="Teshima I."/>
            <person name="Chitayat D."/>
            <person name="Shuman C."/>
            <person name="Weksberg R."/>
            <person name="Zackai E.H."/>
            <person name="Grebe T.A."/>
            <person name="Cox S.R."/>
            <person name="Kirkpatrick S.J."/>
            <person name="Rahman N."/>
            <person name="Friedman J.M."/>
            <person name="Heng H.H.Q."/>
            <person name="Pelicci P.G."/>
            <person name="Lo-Coco F."/>
            <person name="Belloni E."/>
            <person name="Shaffer L.G."/>
            <person name="Pober B."/>
            <person name="Morton C.C."/>
            <person name="Gusella J.F."/>
            <person name="Bruns G.A.P."/>
            <person name="Korf B.R."/>
            <person name="Quade B.J."/>
            <person name="Ligon A.H."/>
            <person name="Ferguson H."/>
            <person name="Higgins A.W."/>
            <person name="Leach N.T."/>
            <person name="Herrick S.R."/>
            <person name="Lemyre E."/>
            <person name="Farra C.G."/>
            <person name="Kim H.-G."/>
            <person name="Summers A.M."/>
            <person name="Gripp K.W."/>
            <person name="Roberts W."/>
            <person name="Szatmari P."/>
            <person name="Winsor E.J.T."/>
            <person name="Grzeschik K.-H."/>
            <person name="Teebi A."/>
            <person name="Minassian B.A."/>
            <person name="Kere J."/>
            <person name="Armengol L."/>
            <person name="Pujana M.A."/>
            <person name="Estivill X."/>
            <person name="Wilson M.D."/>
            <person name="Koop B.F."/>
            <person name="Tosi S."/>
            <person name="Moore G.E."/>
            <person name="Boright A.P."/>
            <person name="Zlotorynski E."/>
            <person name="Kerem B."/>
            <person name="Kroisel P.M."/>
            <person name="Petek E."/>
            <person name="Oscier D.G."/>
            <person name="Mould S.J."/>
            <person name="Doehner H."/>
            <person name="Doehner K."/>
            <person name="Rommens J.M."/>
            <person name="Vincent J.B."/>
            <person name="Venter J.C."/>
            <person name="Li P.W."/>
            <person name="Mural R.J."/>
            <person name="Adams M.D."/>
            <person name="Tsui L.-C."/>
        </authorList>
    </citation>
    <scope>NUCLEOTIDE SEQUENCE [LARGE SCALE GENOMIC DNA]</scope>
</reference>
<reference key="3">
    <citation type="journal article" date="2004" name="Genome Res.">
        <title>The status, quality, and expansion of the NIH full-length cDNA project: the Mammalian Gene Collection (MGC).</title>
        <authorList>
            <consortium name="The MGC Project Team"/>
        </authorList>
    </citation>
    <scope>NUCLEOTIDE SEQUENCE [LARGE SCALE MRNA]</scope>
    <scope>VARIANT GLY-82</scope>
    <source>
        <tissue>Brain</tissue>
        <tissue>Pancreas</tissue>
    </source>
</reference>
<reference key="4">
    <citation type="journal article" date="1995" name="J. Biol. Chem.">
        <title>The sequence and conformation of human pancreatic procarboxypeptidase A2. cDNA cloning, sequence analysis, and three-dimensional model.</title>
        <authorList>
            <person name="Catasus L."/>
            <person name="Vendrell J."/>
            <person name="Aviles F.X."/>
            <person name="Carreira S."/>
            <person name="Puigserver A."/>
            <person name="Billeter M."/>
        </authorList>
    </citation>
    <scope>NUCLEOTIDE SEQUENCE [MRNA] OF 2-419</scope>
    <scope>3D-STRUCTURE MODELING</scope>
    <source>
        <tissue>Pancreas</tissue>
    </source>
</reference>
<reference key="5">
    <citation type="journal article" date="1996" name="Arch. Biochem. Biophys.">
        <title>Expression and characterization of human pancreatic preprocarboxypeptidase A1 and preprocarboxypeptidase A2.</title>
        <authorList>
            <person name="Laethem R.M."/>
            <person name="Blumenkopf T.A."/>
            <person name="Cory M."/>
            <person name="Elwell L."/>
            <person name="Moxham C.P."/>
            <person name="Ray P.H."/>
            <person name="Walton L.M."/>
            <person name="Smith G.K."/>
        </authorList>
    </citation>
    <scope>NUCLEOTIDE SEQUENCE [MRNA] OF 3-419</scope>
    <scope>CHARACTERIZATION</scope>
</reference>
<reference key="6">
    <citation type="submission" date="2003-05" db="EMBL/GenBank/DDBJ databases">
        <title>Cloning of human full-length CDSs in BD Creator(TM) system donor vector.</title>
        <authorList>
            <person name="Kalnine N."/>
            <person name="Chen X."/>
            <person name="Rolfs A."/>
            <person name="Halleck A."/>
            <person name="Hines L."/>
            <person name="Eisenstein S."/>
            <person name="Koundinya M."/>
            <person name="Raphael J."/>
            <person name="Moreira D."/>
            <person name="Kelley T."/>
            <person name="LaBaer J."/>
            <person name="Lin Y."/>
            <person name="Phelan M."/>
            <person name="Farmer A."/>
        </authorList>
    </citation>
    <scope>NUCLEOTIDE SEQUENCE [LARGE SCALE MRNA] OF 3-419</scope>
    <scope>VARIANT GLY-82</scope>
</reference>
<reference key="7">
    <citation type="journal article" date="1989" name="Eur. J. Biochem.">
        <title>Purification and properties of five different forms of human procarboxypeptidases.</title>
        <authorList>
            <person name="Pascual R."/>
            <person name="Burgos F.J."/>
            <person name="Salva M."/>
            <person name="Soriano F."/>
            <person name="Mendez E."/>
            <person name="Aviles F.X."/>
        </authorList>
    </citation>
    <scope>PROTEIN SEQUENCE OF 19-45</scope>
    <scope>CHARACTERIZATION</scope>
</reference>
<reference key="8">
    <citation type="journal article" date="1993" name="Biomed. Chromatogr.">
        <title>Separation of human pancreatic carboxypeptidase A isoenzymes by high performance liquid chromatography.</title>
        <authorList>
            <person name="Linder D."/>
            <person name="Linder M."/>
            <person name="Schade H."/>
            <person name="Sziegoleit A."/>
        </authorList>
    </citation>
    <scope>PROTEIN SEQUENCE OF 115-144</scope>
    <source>
        <tissue>Pancreas</tissue>
    </source>
</reference>
<reference key="9">
    <citation type="journal article" date="2010" name="J. Biol. Chem.">
        <title>Characterization of the substrate specificity of human carboxypeptidase A4 and implications for a role in extracellular peptide processing.</title>
        <authorList>
            <person name="Tanco S."/>
            <person name="Zhang X."/>
            <person name="Morano C."/>
            <person name="Aviles F.X."/>
            <person name="Lorenzo J."/>
            <person name="Fricker L.D."/>
        </authorList>
    </citation>
    <scope>FUNCTION</scope>
    <scope>CATALYTIC ACTIVITY</scope>
    <scope>BIOPHYSICOCHEMICAL PROPERTIES</scope>
</reference>
<reference key="10">
    <citation type="journal article" date="1997" name="EMBO J.">
        <title>The three-dimensional structure of human procarboxypeptidase A2. Deciphering the basis of the inhibition, activation and intrinsic activity of the zymogen.</title>
        <authorList>
            <person name="Garcia-Saez I."/>
            <person name="Reverter D."/>
            <person name="Vendrell J."/>
            <person name="Aviles F.X."/>
            <person name="Coll M."/>
        </authorList>
    </citation>
    <scope>X-RAY CRYSTALLOGRAPHY (1.80 ANGSTROMS) OF 19-419 IN COMPLEX WITH ZINC</scope>
    <scope>DISULFIDE BONDS</scope>
    <scope>COFACTOR</scope>
</reference>
<reference key="11">
    <citation type="journal article" date="1997" name="FEBS Lett.">
        <title>Characterisation and preliminary X-ray diffraction analysis of human pancreatic procarboxypeptidase A2.</title>
        <authorList>
            <person name="Reverter D."/>
            <person name="Garcia-Saez I."/>
            <person name="Catasus L."/>
            <person name="Vendrell J."/>
            <person name="Coll M."/>
            <person name="Aviles F.X."/>
        </authorList>
    </citation>
    <scope>X-RAY CRYSTALLOGRAPHY (1.8 ANGSTROMS) OF 19-419</scope>
</reference>
<reference key="12">
    <citation type="journal article" date="2000" name="Nat. Struct. Biol.">
        <title>Structure of a novel leech carboxypeptidase inhibitor determined free in solution and in complex with human carboxypeptidase A2.</title>
        <authorList>
            <person name="Reverter D."/>
            <person name="Fernandez-Catalan C."/>
            <person name="Baumgartner R."/>
            <person name="Pfander R."/>
            <person name="Huber R."/>
            <person name="Bode W."/>
            <person name="Vendrell J."/>
            <person name="Holak T.A."/>
            <person name="Aviles F.X."/>
        </authorList>
    </citation>
    <scope>X-RAY CRYSTALLOGRAPHY (1.65 ANGSTROMS) OF 118-419 IN COMPLEX WITH ZINC</scope>
    <scope>DISULFIDE BONDS</scope>
    <scope>COFACTOR</scope>
</reference>
<reference key="13">
    <citation type="journal article" date="2003" name="J. Mol. Biol.">
        <title>A large scale test of computational protein design: folding and stability of nine completely redesigned globular proteins.</title>
        <authorList>
            <person name="Dantas G."/>
            <person name="Kuhlman B."/>
            <person name="Callender D."/>
            <person name="Wong M."/>
            <person name="Baker D."/>
        </authorList>
    </citation>
    <scope>X-RAY CRYSTALLOGRAPHY (1.8 ANGSTROMS)</scope>
</reference>
<reference key="14">
    <citation type="journal article" date="2003" name="Protein Sci.">
        <title>NMR solution structure of the activation domain of human procarboxypeptidase A2.</title>
        <authorList>
            <person name="Jimenez M.A."/>
            <person name="Villegas V."/>
            <person name="Santoro J."/>
            <person name="Serrano L."/>
            <person name="Vendrell J."/>
            <person name="Aviles F.X."/>
            <person name="Rico M."/>
        </authorList>
    </citation>
    <scope>STRUCTURE BY NMR OF 19-96</scope>
</reference>
<organism>
    <name type="scientific">Homo sapiens</name>
    <name type="common">Human</name>
    <dbReference type="NCBI Taxonomy" id="9606"/>
    <lineage>
        <taxon>Eukaryota</taxon>
        <taxon>Metazoa</taxon>
        <taxon>Chordata</taxon>
        <taxon>Craniata</taxon>
        <taxon>Vertebrata</taxon>
        <taxon>Euteleostomi</taxon>
        <taxon>Mammalia</taxon>
        <taxon>Eutheria</taxon>
        <taxon>Euarchontoglires</taxon>
        <taxon>Primates</taxon>
        <taxon>Haplorrhini</taxon>
        <taxon>Catarrhini</taxon>
        <taxon>Hominidae</taxon>
        <taxon>Homo</taxon>
    </lineage>
</organism>
<name>CBPA2_HUMAN</name>
<evidence type="ECO:0000250" key="1">
    <source>
        <dbReference type="UniProtKB" id="P00730"/>
    </source>
</evidence>
<evidence type="ECO:0000250" key="2">
    <source>
        <dbReference type="UniProtKB" id="Q9UI42"/>
    </source>
</evidence>
<evidence type="ECO:0000255" key="3"/>
<evidence type="ECO:0000255" key="4">
    <source>
        <dbReference type="PROSITE-ProRule" id="PRU01379"/>
    </source>
</evidence>
<evidence type="ECO:0000269" key="5">
    <source>
    </source>
</evidence>
<evidence type="ECO:0000269" key="6">
    <source>
    </source>
</evidence>
<evidence type="ECO:0000269" key="7">
    <source>
    </source>
</evidence>
<evidence type="ECO:0000269" key="8">
    <source>
    </source>
</evidence>
<evidence type="ECO:0000269" key="9">
    <source>
    </source>
</evidence>
<evidence type="ECO:0000269" key="10">
    <source ref="6"/>
</evidence>
<evidence type="ECO:0000305" key="11"/>
<evidence type="ECO:0007829" key="12">
    <source>
        <dbReference type="PDB" id="1AYE"/>
    </source>
</evidence>
<evidence type="ECO:0007829" key="13">
    <source>
        <dbReference type="PDB" id="1DTD"/>
    </source>
</evidence>
<gene>
    <name type="primary">CPA2</name>
</gene>